<name>LEUD2_ARCFU</name>
<dbReference type="EC" id="4.2.1.33"/>
<dbReference type="EMBL" id="AE000782">
    <property type="protein sequence ID" value="AAB89489.1"/>
    <property type="molecule type" value="Genomic_DNA"/>
</dbReference>
<dbReference type="PIR" id="H69469">
    <property type="entry name" value="H69469"/>
</dbReference>
<dbReference type="RefSeq" id="WP_010879257.1">
    <property type="nucleotide sequence ID" value="NC_000917.1"/>
</dbReference>
<dbReference type="SMR" id="O28513"/>
<dbReference type="STRING" id="224325.AF_1761"/>
<dbReference type="PaxDb" id="224325-AF_1761"/>
<dbReference type="EnsemblBacteria" id="AAB89489">
    <property type="protein sequence ID" value="AAB89489"/>
    <property type="gene ID" value="AF_1761"/>
</dbReference>
<dbReference type="KEGG" id="afu:AF_1761"/>
<dbReference type="eggNOG" id="arCOG02230">
    <property type="taxonomic scope" value="Archaea"/>
</dbReference>
<dbReference type="HOGENOM" id="CLU_081378_1_1_2"/>
<dbReference type="OrthoDB" id="6505at2157"/>
<dbReference type="PhylomeDB" id="O28513"/>
<dbReference type="UniPathway" id="UPA00048">
    <property type="reaction ID" value="UER00071"/>
</dbReference>
<dbReference type="Proteomes" id="UP000002199">
    <property type="component" value="Chromosome"/>
</dbReference>
<dbReference type="GO" id="GO:0003861">
    <property type="term" value="F:3-isopropylmalate dehydratase activity"/>
    <property type="evidence" value="ECO:0007669"/>
    <property type="project" value="UniProtKB-UniRule"/>
</dbReference>
<dbReference type="GO" id="GO:0009098">
    <property type="term" value="P:L-leucine biosynthetic process"/>
    <property type="evidence" value="ECO:0007669"/>
    <property type="project" value="UniProtKB-UniRule"/>
</dbReference>
<dbReference type="CDD" id="cd01577">
    <property type="entry name" value="IPMI_Swivel"/>
    <property type="match status" value="1"/>
</dbReference>
<dbReference type="Gene3D" id="3.20.19.10">
    <property type="entry name" value="Aconitase, domain 4"/>
    <property type="match status" value="1"/>
</dbReference>
<dbReference type="HAMAP" id="MF_01032">
    <property type="entry name" value="LeuD_type2"/>
    <property type="match status" value="1"/>
</dbReference>
<dbReference type="InterPro" id="IPR015928">
    <property type="entry name" value="Aconitase/3IPM_dehydase_swvl"/>
</dbReference>
<dbReference type="InterPro" id="IPR000573">
    <property type="entry name" value="AconitaseA/IPMdHydase_ssu_swvl"/>
</dbReference>
<dbReference type="InterPro" id="IPR033940">
    <property type="entry name" value="IPMI_Swivel"/>
</dbReference>
<dbReference type="InterPro" id="IPR050075">
    <property type="entry name" value="LeuD"/>
</dbReference>
<dbReference type="InterPro" id="IPR011827">
    <property type="entry name" value="LeuD_type2/HacB/DmdB"/>
</dbReference>
<dbReference type="NCBIfam" id="TIGR02087">
    <property type="entry name" value="LEUD_arch"/>
    <property type="match status" value="1"/>
</dbReference>
<dbReference type="PANTHER" id="PTHR43345:SF2">
    <property type="entry name" value="3-ISOPROPYLMALATE DEHYDRATASE SMALL SUBUNIT 1"/>
    <property type="match status" value="1"/>
</dbReference>
<dbReference type="PANTHER" id="PTHR43345">
    <property type="entry name" value="3-ISOPROPYLMALATE DEHYDRATASE SMALL SUBUNIT 2-RELATED-RELATED"/>
    <property type="match status" value="1"/>
</dbReference>
<dbReference type="Pfam" id="PF00694">
    <property type="entry name" value="Aconitase_C"/>
    <property type="match status" value="1"/>
</dbReference>
<dbReference type="SUPFAM" id="SSF52016">
    <property type="entry name" value="LeuD/IlvD-like"/>
    <property type="match status" value="1"/>
</dbReference>
<keyword id="KW-0028">Amino-acid biosynthesis</keyword>
<keyword id="KW-0100">Branched-chain amino acid biosynthesis</keyword>
<keyword id="KW-0432">Leucine biosynthesis</keyword>
<keyword id="KW-0456">Lyase</keyword>
<keyword id="KW-1185">Reference proteome</keyword>
<sequence>MKMVGRAWKFGDDISTDHITPGRYYHLRSNMPELAKHVMEDADPDFMKKFRPGDFIVAGKNFGMGSSREHAPLALKIAGVSAVIAKSFARIFYRNAINVGLPVLIADTDSIDSGDELEVDLGKGLVVNRTKGIEIRVKPIPEVMLKILHEGGLVSYVKKHGDIKI</sequence>
<evidence type="ECO:0000250" key="1"/>
<evidence type="ECO:0000305" key="2"/>
<proteinExistence type="inferred from homology"/>
<gene>
    <name type="primary">leuD2</name>
    <name type="ordered locus">AF_1761</name>
</gene>
<protein>
    <recommendedName>
        <fullName>3-isopropylmalate dehydratase small subunit 2</fullName>
        <ecNumber>4.2.1.33</ecNumber>
    </recommendedName>
    <alternativeName>
        <fullName>Alpha-IPM isomerase 2</fullName>
        <shortName>IPMI 2</shortName>
    </alternativeName>
    <alternativeName>
        <fullName>Isopropylmalate isomerase 2</fullName>
    </alternativeName>
</protein>
<accession>O28513</accession>
<reference key="1">
    <citation type="journal article" date="1997" name="Nature">
        <title>The complete genome sequence of the hyperthermophilic, sulphate-reducing archaeon Archaeoglobus fulgidus.</title>
        <authorList>
            <person name="Klenk H.-P."/>
            <person name="Clayton R.A."/>
            <person name="Tomb J.-F."/>
            <person name="White O."/>
            <person name="Nelson K.E."/>
            <person name="Ketchum K.A."/>
            <person name="Dodson R.J."/>
            <person name="Gwinn M.L."/>
            <person name="Hickey E.K."/>
            <person name="Peterson J.D."/>
            <person name="Richardson D.L."/>
            <person name="Kerlavage A.R."/>
            <person name="Graham D.E."/>
            <person name="Kyrpides N.C."/>
            <person name="Fleischmann R.D."/>
            <person name="Quackenbush J."/>
            <person name="Lee N.H."/>
            <person name="Sutton G.G."/>
            <person name="Gill S.R."/>
            <person name="Kirkness E.F."/>
            <person name="Dougherty B.A."/>
            <person name="McKenney K."/>
            <person name="Adams M.D."/>
            <person name="Loftus B.J."/>
            <person name="Peterson S.N."/>
            <person name="Reich C.I."/>
            <person name="McNeil L.K."/>
            <person name="Badger J.H."/>
            <person name="Glodek A."/>
            <person name="Zhou L."/>
            <person name="Overbeek R."/>
            <person name="Gocayne J.D."/>
            <person name="Weidman J.F."/>
            <person name="McDonald L.A."/>
            <person name="Utterback T.R."/>
            <person name="Cotton M.D."/>
            <person name="Spriggs T."/>
            <person name="Artiach P."/>
            <person name="Kaine B.P."/>
            <person name="Sykes S.M."/>
            <person name="Sadow P.W."/>
            <person name="D'Andrea K.P."/>
            <person name="Bowman C."/>
            <person name="Fujii C."/>
            <person name="Garland S.A."/>
            <person name="Mason T.M."/>
            <person name="Olsen G.J."/>
            <person name="Fraser C.M."/>
            <person name="Smith H.O."/>
            <person name="Woese C.R."/>
            <person name="Venter J.C."/>
        </authorList>
    </citation>
    <scope>NUCLEOTIDE SEQUENCE [LARGE SCALE GENOMIC DNA]</scope>
    <source>
        <strain>ATCC 49558 / DSM 4304 / JCM 9628 / NBRC 100126 / VC-16</strain>
    </source>
</reference>
<feature type="chain" id="PRO_0000141932" description="3-isopropylmalate dehydratase small subunit 2">
    <location>
        <begin position="1"/>
        <end position="165"/>
    </location>
</feature>
<organism>
    <name type="scientific">Archaeoglobus fulgidus (strain ATCC 49558 / DSM 4304 / JCM 9628 / NBRC 100126 / VC-16)</name>
    <dbReference type="NCBI Taxonomy" id="224325"/>
    <lineage>
        <taxon>Archaea</taxon>
        <taxon>Methanobacteriati</taxon>
        <taxon>Methanobacteriota</taxon>
        <taxon>Archaeoglobi</taxon>
        <taxon>Archaeoglobales</taxon>
        <taxon>Archaeoglobaceae</taxon>
        <taxon>Archaeoglobus</taxon>
    </lineage>
</organism>
<comment type="function">
    <text evidence="1">Catalyzes the isomerization between 2-isopropylmalate and 3-isopropylmalate, via the formation of 2-isopropylmaleate.</text>
</comment>
<comment type="catalytic activity">
    <reaction>
        <text>(2R,3S)-3-isopropylmalate = (2S)-2-isopropylmalate</text>
        <dbReference type="Rhea" id="RHEA:32287"/>
        <dbReference type="ChEBI" id="CHEBI:1178"/>
        <dbReference type="ChEBI" id="CHEBI:35121"/>
        <dbReference type="EC" id="4.2.1.33"/>
    </reaction>
</comment>
<comment type="pathway">
    <text>Amino-acid biosynthesis; L-leucine biosynthesis; L-leucine from 3-methyl-2-oxobutanoate: step 2/4.</text>
</comment>
<comment type="subunit">
    <text evidence="1">Heterodimer of LeuC and LeuD.</text>
</comment>
<comment type="similarity">
    <text evidence="2">Belongs to the LeuD family. LeuD type 2 subfamily.</text>
</comment>